<organism>
    <name type="scientific">Brucella anthropi (strain ATCC 49188 / DSM 6882 / CCUG 24695 / JCM 21032 / LMG 3331 / NBRC 15819 / NCTC 12168 / Alc 37)</name>
    <name type="common">Ochrobactrum anthropi</name>
    <dbReference type="NCBI Taxonomy" id="439375"/>
    <lineage>
        <taxon>Bacteria</taxon>
        <taxon>Pseudomonadati</taxon>
        <taxon>Pseudomonadota</taxon>
        <taxon>Alphaproteobacteria</taxon>
        <taxon>Hyphomicrobiales</taxon>
        <taxon>Brucellaceae</taxon>
        <taxon>Brucella/Ochrobactrum group</taxon>
        <taxon>Brucella</taxon>
    </lineage>
</organism>
<sequence length="227" mass="25173">MPMHSPALPMLHLMRLVSPSQPVGAFSYSRGLEWAVHAGTVTNEESCAGWVFGLLEHSYAVLDGAIFWRMISALMRNDDAEFCRLNDWLGASRESSELELEDRRMGESLRTLLSELGVERARSFASEQRATYPAAFSIAACHWNIEPVDALRGLMWSVVESQIMAAIRLVPLGHTAGQRILIAGAAKIERAVEKARTLNDDEIGNTAPALAMASAWHETQYSRLFRS</sequence>
<feature type="chain" id="PRO_0000344140" description="Urease accessory protein UreF 2">
    <location>
        <begin position="1"/>
        <end position="227"/>
    </location>
</feature>
<gene>
    <name evidence="1" type="primary">ureF2</name>
    <name type="ordered locus">Oant_2439</name>
</gene>
<proteinExistence type="inferred from homology"/>
<evidence type="ECO:0000255" key="1">
    <source>
        <dbReference type="HAMAP-Rule" id="MF_01385"/>
    </source>
</evidence>
<reference key="1">
    <citation type="journal article" date="2011" name="J. Bacteriol.">
        <title>Genome of Ochrobactrum anthropi ATCC 49188 T, a versatile opportunistic pathogen and symbiont of several eukaryotic hosts.</title>
        <authorList>
            <person name="Chain P.S."/>
            <person name="Lang D.M."/>
            <person name="Comerci D.J."/>
            <person name="Malfatti S.A."/>
            <person name="Vergez L.M."/>
            <person name="Shin M."/>
            <person name="Ugalde R.A."/>
            <person name="Garcia E."/>
            <person name="Tolmasky M.E."/>
        </authorList>
    </citation>
    <scope>NUCLEOTIDE SEQUENCE [LARGE SCALE GENOMIC DNA]</scope>
    <source>
        <strain>ATCC 49188 / DSM 6882 / CCUG 24695 / JCM 21032 / LMG 3331 / NBRC 15819 / NCTC 12168 / Alc 37</strain>
    </source>
</reference>
<accession>A6X1P9</accession>
<protein>
    <recommendedName>
        <fullName evidence="1">Urease accessory protein UreF 2</fullName>
    </recommendedName>
</protein>
<comment type="function">
    <text evidence="1">Required for maturation of urease via the functional incorporation of the urease nickel metallocenter.</text>
</comment>
<comment type="subunit">
    <text evidence="1">UreD, UreF and UreG form a complex that acts as a GTP-hydrolysis-dependent molecular chaperone, activating the urease apoprotein by helping to assemble the nickel containing metallocenter of UreC. The UreE protein probably delivers the nickel.</text>
</comment>
<comment type="subcellular location">
    <subcellularLocation>
        <location evidence="1">Cytoplasm</location>
    </subcellularLocation>
</comment>
<comment type="similarity">
    <text evidence="1">Belongs to the UreF family.</text>
</comment>
<keyword id="KW-0143">Chaperone</keyword>
<keyword id="KW-0963">Cytoplasm</keyword>
<keyword id="KW-0996">Nickel insertion</keyword>
<keyword id="KW-1185">Reference proteome</keyword>
<dbReference type="EMBL" id="CP000758">
    <property type="protein sequence ID" value="ABS15153.1"/>
    <property type="molecule type" value="Genomic_DNA"/>
</dbReference>
<dbReference type="RefSeq" id="WP_012092273.1">
    <property type="nucleotide sequence ID" value="NC_009667.1"/>
</dbReference>
<dbReference type="SMR" id="A6X1P9"/>
<dbReference type="STRING" id="439375.Oant_2439"/>
<dbReference type="KEGG" id="oan:Oant_2439"/>
<dbReference type="eggNOG" id="COG0830">
    <property type="taxonomic scope" value="Bacteria"/>
</dbReference>
<dbReference type="HOGENOM" id="CLU_049215_2_1_5"/>
<dbReference type="Proteomes" id="UP000002301">
    <property type="component" value="Chromosome 1"/>
</dbReference>
<dbReference type="GO" id="GO:0005737">
    <property type="term" value="C:cytoplasm"/>
    <property type="evidence" value="ECO:0007669"/>
    <property type="project" value="UniProtKB-SubCell"/>
</dbReference>
<dbReference type="GO" id="GO:0016151">
    <property type="term" value="F:nickel cation binding"/>
    <property type="evidence" value="ECO:0007669"/>
    <property type="project" value="UniProtKB-UniRule"/>
</dbReference>
<dbReference type="Gene3D" id="1.10.4190.10">
    <property type="entry name" value="Urease accessory protein UreF"/>
    <property type="match status" value="1"/>
</dbReference>
<dbReference type="HAMAP" id="MF_01385">
    <property type="entry name" value="UreF"/>
    <property type="match status" value="1"/>
</dbReference>
<dbReference type="InterPro" id="IPR002639">
    <property type="entry name" value="UreF"/>
</dbReference>
<dbReference type="InterPro" id="IPR038277">
    <property type="entry name" value="UreF_sf"/>
</dbReference>
<dbReference type="PANTHER" id="PTHR33620">
    <property type="entry name" value="UREASE ACCESSORY PROTEIN F"/>
    <property type="match status" value="1"/>
</dbReference>
<dbReference type="PANTHER" id="PTHR33620:SF1">
    <property type="entry name" value="UREASE ACCESSORY PROTEIN F"/>
    <property type="match status" value="1"/>
</dbReference>
<dbReference type="Pfam" id="PF01730">
    <property type="entry name" value="UreF"/>
    <property type="match status" value="1"/>
</dbReference>
<dbReference type="PIRSF" id="PIRSF009467">
    <property type="entry name" value="Ureas_acces_UreF"/>
    <property type="match status" value="1"/>
</dbReference>
<name>UREF2_BRUA4</name>